<dbReference type="EMBL" id="AY073783">
    <property type="protein sequence ID" value="AAL61446.1"/>
    <property type="molecule type" value="Genomic_DNA"/>
</dbReference>
<dbReference type="EMBL" id="AY317601">
    <property type="protein sequence ID" value="AAP70996.1"/>
    <property type="molecule type" value="Genomic_DNA"/>
</dbReference>
<dbReference type="CCDS" id="CCDS21712.1"/>
<dbReference type="RefSeq" id="NP_666422.1">
    <property type="nucleotide sequence ID" value="NM_146310.1"/>
</dbReference>
<dbReference type="SMR" id="Q8VEW5"/>
<dbReference type="FunCoup" id="Q8VEW5">
    <property type="interactions" value="1159"/>
</dbReference>
<dbReference type="STRING" id="10090.ENSMUSP00000079005"/>
<dbReference type="GlyCosmos" id="Q8VEW5">
    <property type="glycosylation" value="1 site, No reported glycans"/>
</dbReference>
<dbReference type="GlyGen" id="Q8VEW5">
    <property type="glycosylation" value="1 site"/>
</dbReference>
<dbReference type="PaxDb" id="10090-ENSMUSP00000079005"/>
<dbReference type="DNASU" id="258307"/>
<dbReference type="Ensembl" id="ENSMUST00000080106.2">
    <property type="protein sequence ID" value="ENSMUSP00000079005.2"/>
    <property type="gene ID" value="ENSMUSG00000093980.2"/>
</dbReference>
<dbReference type="GeneID" id="258307"/>
<dbReference type="KEGG" id="mmu:258307"/>
<dbReference type="UCSC" id="uc009jch.1">
    <property type="organism name" value="mouse"/>
</dbReference>
<dbReference type="AGR" id="MGI:3030327"/>
<dbReference type="CTD" id="258307"/>
<dbReference type="MGI" id="MGI:3030327">
    <property type="gene designation" value="Or5p68"/>
</dbReference>
<dbReference type="VEuPathDB" id="HostDB:ENSMUSG00000093980"/>
<dbReference type="eggNOG" id="ENOG502SKA1">
    <property type="taxonomic scope" value="Eukaryota"/>
</dbReference>
<dbReference type="GeneTree" id="ENSGT01130000278279"/>
<dbReference type="HOGENOM" id="CLU_012526_1_0_1"/>
<dbReference type="InParanoid" id="Q8VEW5"/>
<dbReference type="OMA" id="FCGTVEC"/>
<dbReference type="OrthoDB" id="9440694at2759"/>
<dbReference type="PhylomeDB" id="Q8VEW5"/>
<dbReference type="TreeFam" id="TF338848"/>
<dbReference type="BioGRID-ORCS" id="258307">
    <property type="hits" value="0 hits in 51 CRISPR screens"/>
</dbReference>
<dbReference type="PRO" id="PR:Q8VEW5"/>
<dbReference type="Proteomes" id="UP000000589">
    <property type="component" value="Chromosome 7"/>
</dbReference>
<dbReference type="RNAct" id="Q8VEW5">
    <property type="molecule type" value="protein"/>
</dbReference>
<dbReference type="GO" id="GO:0016020">
    <property type="term" value="C:membrane"/>
    <property type="evidence" value="ECO:0000247"/>
    <property type="project" value="MGI"/>
</dbReference>
<dbReference type="GO" id="GO:0005886">
    <property type="term" value="C:plasma membrane"/>
    <property type="evidence" value="ECO:0007669"/>
    <property type="project" value="UniProtKB-SubCell"/>
</dbReference>
<dbReference type="GO" id="GO:0004930">
    <property type="term" value="F:G protein-coupled receptor activity"/>
    <property type="evidence" value="ECO:0007669"/>
    <property type="project" value="UniProtKB-KW"/>
</dbReference>
<dbReference type="GO" id="GO:0004984">
    <property type="term" value="F:olfactory receptor activity"/>
    <property type="evidence" value="ECO:0000247"/>
    <property type="project" value="MGI"/>
</dbReference>
<dbReference type="GO" id="GO:0007186">
    <property type="term" value="P:G protein-coupled receptor signaling pathway"/>
    <property type="evidence" value="ECO:0000247"/>
    <property type="project" value="MGI"/>
</dbReference>
<dbReference type="GO" id="GO:0007608">
    <property type="term" value="P:sensory perception of smell"/>
    <property type="evidence" value="ECO:0000247"/>
    <property type="project" value="MGI"/>
</dbReference>
<dbReference type="CDD" id="cd15416">
    <property type="entry name" value="7tmA_OR5P-like"/>
    <property type="match status" value="1"/>
</dbReference>
<dbReference type="FunFam" id="1.20.1070.10:FF:000004">
    <property type="entry name" value="Olfactory receptor"/>
    <property type="match status" value="1"/>
</dbReference>
<dbReference type="Gene3D" id="1.20.1070.10">
    <property type="entry name" value="Rhodopsin 7-helix transmembrane proteins"/>
    <property type="match status" value="1"/>
</dbReference>
<dbReference type="InterPro" id="IPR000276">
    <property type="entry name" value="GPCR_Rhodpsn"/>
</dbReference>
<dbReference type="InterPro" id="IPR017452">
    <property type="entry name" value="GPCR_Rhodpsn_7TM"/>
</dbReference>
<dbReference type="InterPro" id="IPR000725">
    <property type="entry name" value="Olfact_rcpt"/>
</dbReference>
<dbReference type="PANTHER" id="PTHR48018">
    <property type="entry name" value="OLFACTORY RECEPTOR"/>
    <property type="match status" value="1"/>
</dbReference>
<dbReference type="Pfam" id="PF13853">
    <property type="entry name" value="7tm_4"/>
    <property type="match status" value="1"/>
</dbReference>
<dbReference type="PRINTS" id="PR00237">
    <property type="entry name" value="GPCRRHODOPSN"/>
</dbReference>
<dbReference type="PRINTS" id="PR00245">
    <property type="entry name" value="OLFACTORYR"/>
</dbReference>
<dbReference type="SUPFAM" id="SSF81321">
    <property type="entry name" value="Family A G protein-coupled receptor-like"/>
    <property type="match status" value="1"/>
</dbReference>
<dbReference type="PROSITE" id="PS00237">
    <property type="entry name" value="G_PROTEIN_RECEP_F1_1"/>
    <property type="match status" value="1"/>
</dbReference>
<dbReference type="PROSITE" id="PS50262">
    <property type="entry name" value="G_PROTEIN_RECEP_F1_2"/>
    <property type="match status" value="1"/>
</dbReference>
<keyword id="KW-1003">Cell membrane</keyword>
<keyword id="KW-1015">Disulfide bond</keyword>
<keyword id="KW-0297">G-protein coupled receptor</keyword>
<keyword id="KW-0325">Glycoprotein</keyword>
<keyword id="KW-0472">Membrane</keyword>
<keyword id="KW-0552">Olfaction</keyword>
<keyword id="KW-0675">Receptor</keyword>
<keyword id="KW-1185">Reference proteome</keyword>
<keyword id="KW-0716">Sensory transduction</keyword>
<keyword id="KW-0807">Transducer</keyword>
<keyword id="KW-0812">Transmembrane</keyword>
<keyword id="KW-1133">Transmembrane helix</keyword>
<comment type="function">
    <text>Potential odorant receptor.</text>
</comment>
<comment type="subcellular location">
    <subcellularLocation>
        <location evidence="3">Cell membrane</location>
        <topology evidence="1">Multi-pass membrane protein</topology>
    </subcellularLocation>
</comment>
<comment type="similarity">
    <text evidence="2">Belongs to the G-protein coupled receptor 1 family.</text>
</comment>
<name>O5P68_MOUSE</name>
<reference key="1">
    <citation type="journal article" date="2002" name="Nat. Neurosci.">
        <title>The olfactory receptor gene superfamily of the mouse.</title>
        <authorList>
            <person name="Zhang X."/>
            <person name="Firestein S."/>
        </authorList>
    </citation>
    <scope>NUCLEOTIDE SEQUENCE [GENOMIC DNA]</scope>
</reference>
<reference key="2">
    <citation type="journal article" date="2002" name="Hum. Mol. Genet.">
        <title>Different evolutionary processes shaped the mouse and human olfactory receptor gene families.</title>
        <authorList>
            <person name="Young J.M."/>
            <person name="Friedman C."/>
            <person name="Williams E.M."/>
            <person name="Ross J.A."/>
            <person name="Tonnes-Priddy L."/>
            <person name="Trask B.J."/>
        </authorList>
    </citation>
    <scope>NUCLEOTIDE SEQUENCE [GENOMIC DNA]</scope>
</reference>
<reference key="3">
    <citation type="journal article" date="2002" name="Hum. Mol. Genet.">
        <authorList>
            <person name="Young J.M."/>
            <person name="Friedman C."/>
            <person name="Williams E.M."/>
            <person name="Ross J.A."/>
            <person name="Tonnes-Priddy L."/>
            <person name="Trask B.J."/>
        </authorList>
    </citation>
    <scope>ERRATUM OF PUBMED:11875048</scope>
</reference>
<sequence length="314" mass="34953">MAFLHNGNHTAVTEFILLGLTDDPVFRVILFTIILCIYLVTVSGNLSTILLIRVSSQLHHPMYFFLSHLASVDIGYSSSVTPNMLANFLVEKNTISYLGCTIQLSLAAFCGTVECFLLATMAYDRFMAICSPLLYSTKMSTQVCIQLIVGSYIGGFLNASSFTLFFLSFLFCGPNRINHFYCDFAPLVALSCSDVSVSEVVTSFFSGSVTMITMLVIAISYTYILITILKMRSTEGRHKAFSTCTSHLTAVTLFYGTITFIYVMPKSSFSTDQNKVVSVFYMVVIPMLNPLIYSLRNNEIKDALKRHLGKKIFS</sequence>
<protein>
    <recommendedName>
        <fullName evidence="3">Olfactory receptor 5P68</fullName>
    </recommendedName>
    <alternativeName>
        <fullName>Olfactory receptor 204-35</fullName>
    </alternativeName>
    <alternativeName>
        <fullName>Olfactory receptor 493</fullName>
    </alternativeName>
</protein>
<accession>Q8VEW5</accession>
<organism>
    <name type="scientific">Mus musculus</name>
    <name type="common">Mouse</name>
    <dbReference type="NCBI Taxonomy" id="10090"/>
    <lineage>
        <taxon>Eukaryota</taxon>
        <taxon>Metazoa</taxon>
        <taxon>Chordata</taxon>
        <taxon>Craniata</taxon>
        <taxon>Vertebrata</taxon>
        <taxon>Euteleostomi</taxon>
        <taxon>Mammalia</taxon>
        <taxon>Eutheria</taxon>
        <taxon>Euarchontoglires</taxon>
        <taxon>Glires</taxon>
        <taxon>Rodentia</taxon>
        <taxon>Myomorpha</taxon>
        <taxon>Muroidea</taxon>
        <taxon>Muridae</taxon>
        <taxon>Murinae</taxon>
        <taxon>Mus</taxon>
        <taxon>Mus</taxon>
    </lineage>
</organism>
<feature type="chain" id="PRO_0000150848" description="Olfactory receptor 5P68">
    <location>
        <begin position="1"/>
        <end position="314"/>
    </location>
</feature>
<feature type="topological domain" description="Extracellular" evidence="1">
    <location>
        <begin position="1"/>
        <end position="28"/>
    </location>
</feature>
<feature type="transmembrane region" description="Helical; Name=1" evidence="1">
    <location>
        <begin position="29"/>
        <end position="49"/>
    </location>
</feature>
<feature type="topological domain" description="Cytoplasmic" evidence="1">
    <location>
        <begin position="50"/>
        <end position="57"/>
    </location>
</feature>
<feature type="transmembrane region" description="Helical; Name=2" evidence="1">
    <location>
        <begin position="58"/>
        <end position="78"/>
    </location>
</feature>
<feature type="topological domain" description="Extracellular" evidence="1">
    <location>
        <begin position="79"/>
        <end position="102"/>
    </location>
</feature>
<feature type="transmembrane region" description="Helical; Name=3" evidence="1">
    <location>
        <begin position="103"/>
        <end position="123"/>
    </location>
</feature>
<feature type="topological domain" description="Cytoplasmic" evidence="1">
    <location>
        <begin position="124"/>
        <end position="136"/>
    </location>
</feature>
<feature type="transmembrane region" description="Helical; Name=4" evidence="1">
    <location>
        <begin position="137"/>
        <end position="157"/>
    </location>
</feature>
<feature type="topological domain" description="Extracellular" evidence="1">
    <location>
        <begin position="158"/>
        <end position="199"/>
    </location>
</feature>
<feature type="transmembrane region" description="Helical; Name=5" evidence="1">
    <location>
        <begin position="200"/>
        <end position="220"/>
    </location>
</feature>
<feature type="topological domain" description="Cytoplasmic" evidence="1">
    <location>
        <begin position="221"/>
        <end position="240"/>
    </location>
</feature>
<feature type="transmembrane region" description="Helical; Name=6" evidence="1">
    <location>
        <begin position="241"/>
        <end position="261"/>
    </location>
</feature>
<feature type="topological domain" description="Extracellular" evidence="1">
    <location>
        <begin position="262"/>
        <end position="274"/>
    </location>
</feature>
<feature type="transmembrane region" description="Helical; Name=7" evidence="1">
    <location>
        <begin position="275"/>
        <end position="295"/>
    </location>
</feature>
<feature type="topological domain" description="Cytoplasmic" evidence="1">
    <location>
        <begin position="296"/>
        <end position="314"/>
    </location>
</feature>
<feature type="glycosylation site" description="N-linked (GlcNAc...) asparagine" evidence="1">
    <location>
        <position position="8"/>
    </location>
</feature>
<feature type="disulfide bond" evidence="2">
    <location>
        <begin position="100"/>
        <end position="192"/>
    </location>
</feature>
<gene>
    <name evidence="4" type="primary">Or5p68</name>
    <name evidence="4" type="synonym">Mor204-35</name>
    <name evidence="4" type="synonym">Olfr493</name>
</gene>
<evidence type="ECO:0000255" key="1"/>
<evidence type="ECO:0000255" key="2">
    <source>
        <dbReference type="PROSITE-ProRule" id="PRU00521"/>
    </source>
</evidence>
<evidence type="ECO:0000305" key="3"/>
<evidence type="ECO:0000312" key="4">
    <source>
        <dbReference type="MGI" id="MGI:3030327"/>
    </source>
</evidence>
<proteinExistence type="inferred from homology"/>